<name>FEOA_ECO57</name>
<dbReference type="EMBL" id="AE005174">
    <property type="protein sequence ID" value="AAG58509.1"/>
    <property type="molecule type" value="Genomic_DNA"/>
</dbReference>
<dbReference type="EMBL" id="BA000007">
    <property type="protein sequence ID" value="BAB37673.1"/>
    <property type="molecule type" value="Genomic_DNA"/>
</dbReference>
<dbReference type="PIR" id="A86006">
    <property type="entry name" value="A86006"/>
</dbReference>
<dbReference type="PIR" id="B91160">
    <property type="entry name" value="B91160"/>
</dbReference>
<dbReference type="RefSeq" id="NP_312277.1">
    <property type="nucleotide sequence ID" value="NC_002695.1"/>
</dbReference>
<dbReference type="RefSeq" id="WP_001200455.1">
    <property type="nucleotide sequence ID" value="NZ_VOAI01000004.1"/>
</dbReference>
<dbReference type="BMRB" id="P0AEL5"/>
<dbReference type="SMR" id="P0AEL5"/>
<dbReference type="STRING" id="155864.Z4763"/>
<dbReference type="GeneID" id="915893"/>
<dbReference type="GeneID" id="93778590"/>
<dbReference type="KEGG" id="ece:Z4763"/>
<dbReference type="KEGG" id="ecs:ECs_4250"/>
<dbReference type="PATRIC" id="fig|386585.9.peg.4439"/>
<dbReference type="eggNOG" id="COG1918">
    <property type="taxonomic scope" value="Bacteria"/>
</dbReference>
<dbReference type="HOGENOM" id="CLU_150646_13_0_6"/>
<dbReference type="OMA" id="MGDPVQI"/>
<dbReference type="Proteomes" id="UP000000558">
    <property type="component" value="Chromosome"/>
</dbReference>
<dbReference type="Proteomes" id="UP000002519">
    <property type="component" value="Chromosome"/>
</dbReference>
<dbReference type="GO" id="GO:0046914">
    <property type="term" value="F:transition metal ion binding"/>
    <property type="evidence" value="ECO:0007669"/>
    <property type="project" value="InterPro"/>
</dbReference>
<dbReference type="GO" id="GO:0006826">
    <property type="term" value="P:iron ion transport"/>
    <property type="evidence" value="ECO:0007669"/>
    <property type="project" value="UniProtKB-KW"/>
</dbReference>
<dbReference type="FunFam" id="2.30.30.90:FF:000001">
    <property type="entry name" value="Ferrous iron transporter A"/>
    <property type="match status" value="1"/>
</dbReference>
<dbReference type="Gene3D" id="2.30.30.90">
    <property type="match status" value="1"/>
</dbReference>
<dbReference type="InterPro" id="IPR007167">
    <property type="entry name" value="Fe-transptr_FeoA-like"/>
</dbReference>
<dbReference type="InterPro" id="IPR052713">
    <property type="entry name" value="FeoA"/>
</dbReference>
<dbReference type="InterPro" id="IPR038157">
    <property type="entry name" value="FeoA_core_dom"/>
</dbReference>
<dbReference type="InterPro" id="IPR008988">
    <property type="entry name" value="Transcriptional_repressor_C"/>
</dbReference>
<dbReference type="NCBIfam" id="NF007106">
    <property type="entry name" value="PRK09555.1"/>
    <property type="match status" value="1"/>
</dbReference>
<dbReference type="PANTHER" id="PTHR42954">
    <property type="entry name" value="FE(2+) TRANSPORT PROTEIN A"/>
    <property type="match status" value="1"/>
</dbReference>
<dbReference type="PANTHER" id="PTHR42954:SF2">
    <property type="entry name" value="FE(2+) TRANSPORT PROTEIN A"/>
    <property type="match status" value="1"/>
</dbReference>
<dbReference type="Pfam" id="PF04023">
    <property type="entry name" value="FeoA"/>
    <property type="match status" value="1"/>
</dbReference>
<dbReference type="SMART" id="SM00899">
    <property type="entry name" value="FeoA"/>
    <property type="match status" value="1"/>
</dbReference>
<dbReference type="SUPFAM" id="SSF50037">
    <property type="entry name" value="C-terminal domain of transcriptional repressors"/>
    <property type="match status" value="1"/>
</dbReference>
<proteinExistence type="inferred from homology"/>
<organism>
    <name type="scientific">Escherichia coli O157:H7</name>
    <dbReference type="NCBI Taxonomy" id="83334"/>
    <lineage>
        <taxon>Bacteria</taxon>
        <taxon>Pseudomonadati</taxon>
        <taxon>Pseudomonadota</taxon>
        <taxon>Gammaproteobacteria</taxon>
        <taxon>Enterobacterales</taxon>
        <taxon>Enterobacteriaceae</taxon>
        <taxon>Escherichia</taxon>
    </lineage>
</organism>
<comment type="function">
    <text evidence="1">Involved in Fe(2+) ion uptake (By similarity).</text>
</comment>
<comment type="similarity">
    <text evidence="2">Belongs to the FeoA family.</text>
</comment>
<protein>
    <recommendedName>
        <fullName evidence="2">Fe(2+) transport protein A</fullName>
    </recommendedName>
    <alternativeName>
        <fullName>Ferrous iron transport protein A</fullName>
    </alternativeName>
</protein>
<accession>P0AEL5</accession>
<accession>P33649</accession>
<keyword id="KW-0406">Ion transport</keyword>
<keyword id="KW-0408">Iron</keyword>
<keyword id="KW-0410">Iron transport</keyword>
<keyword id="KW-1185">Reference proteome</keyword>
<keyword id="KW-0813">Transport</keyword>
<evidence type="ECO:0000250" key="1">
    <source>
        <dbReference type="UniProtKB" id="P0AEL3"/>
    </source>
</evidence>
<evidence type="ECO:0000305" key="2"/>
<sequence length="75" mass="8371">MQYTPDTAWKITGFSREISPAYRQKLLSLGMLPGSSFNVVRVAPLGDPIHIETRRVSLVLRKKDLALLEVEAVSC</sequence>
<gene>
    <name type="primary">feoA</name>
    <name type="ordered locus">Z4763</name>
    <name type="ordered locus">ECs4250</name>
</gene>
<feature type="chain" id="PRO_0000087224" description="Fe(2+) transport protein A">
    <location>
        <begin position="1"/>
        <end position="75"/>
    </location>
</feature>
<reference key="1">
    <citation type="journal article" date="2001" name="Nature">
        <title>Genome sequence of enterohaemorrhagic Escherichia coli O157:H7.</title>
        <authorList>
            <person name="Perna N.T."/>
            <person name="Plunkett G. III"/>
            <person name="Burland V."/>
            <person name="Mau B."/>
            <person name="Glasner J.D."/>
            <person name="Rose D.J."/>
            <person name="Mayhew G.F."/>
            <person name="Evans P.S."/>
            <person name="Gregor J."/>
            <person name="Kirkpatrick H.A."/>
            <person name="Posfai G."/>
            <person name="Hackett J."/>
            <person name="Klink S."/>
            <person name="Boutin A."/>
            <person name="Shao Y."/>
            <person name="Miller L."/>
            <person name="Grotbeck E.J."/>
            <person name="Davis N.W."/>
            <person name="Lim A."/>
            <person name="Dimalanta E.T."/>
            <person name="Potamousis K."/>
            <person name="Apodaca J."/>
            <person name="Anantharaman T.S."/>
            <person name="Lin J."/>
            <person name="Yen G."/>
            <person name="Schwartz D.C."/>
            <person name="Welch R.A."/>
            <person name="Blattner F.R."/>
        </authorList>
    </citation>
    <scope>NUCLEOTIDE SEQUENCE [LARGE SCALE GENOMIC DNA]</scope>
    <source>
        <strain>O157:H7 / EDL933 / ATCC 700927 / EHEC</strain>
    </source>
</reference>
<reference key="2">
    <citation type="journal article" date="2001" name="DNA Res.">
        <title>Complete genome sequence of enterohemorrhagic Escherichia coli O157:H7 and genomic comparison with a laboratory strain K-12.</title>
        <authorList>
            <person name="Hayashi T."/>
            <person name="Makino K."/>
            <person name="Ohnishi M."/>
            <person name="Kurokawa K."/>
            <person name="Ishii K."/>
            <person name="Yokoyama K."/>
            <person name="Han C.-G."/>
            <person name="Ohtsubo E."/>
            <person name="Nakayama K."/>
            <person name="Murata T."/>
            <person name="Tanaka M."/>
            <person name="Tobe T."/>
            <person name="Iida T."/>
            <person name="Takami H."/>
            <person name="Honda T."/>
            <person name="Sasakawa C."/>
            <person name="Ogasawara N."/>
            <person name="Yasunaga T."/>
            <person name="Kuhara S."/>
            <person name="Shiba T."/>
            <person name="Hattori M."/>
            <person name="Shinagawa H."/>
        </authorList>
    </citation>
    <scope>NUCLEOTIDE SEQUENCE [LARGE SCALE GENOMIC DNA]</scope>
    <source>
        <strain>O157:H7 / Sakai / RIMD 0509952 / EHEC</strain>
    </source>
</reference>